<reference key="1">
    <citation type="journal article" date="2000" name="Nucleic Acids Res.">
        <title>Genome sequences of Chlamydia trachomatis MoPn and Chlamydia pneumoniae AR39.</title>
        <authorList>
            <person name="Read T.D."/>
            <person name="Brunham R.C."/>
            <person name="Shen C."/>
            <person name="Gill S.R."/>
            <person name="Heidelberg J.F."/>
            <person name="White O."/>
            <person name="Hickey E.K."/>
            <person name="Peterson J.D."/>
            <person name="Utterback T.R."/>
            <person name="Berry K.J."/>
            <person name="Bass S."/>
            <person name="Linher K.D."/>
            <person name="Weidman J.F."/>
            <person name="Khouri H.M."/>
            <person name="Craven B."/>
            <person name="Bowman C."/>
            <person name="Dodson R.J."/>
            <person name="Gwinn M.L."/>
            <person name="Nelson W.C."/>
            <person name="DeBoy R.T."/>
            <person name="Kolonay J.F."/>
            <person name="McClarty G."/>
            <person name="Salzberg S.L."/>
            <person name="Eisen J.A."/>
            <person name="Fraser C.M."/>
        </authorList>
    </citation>
    <scope>NUCLEOTIDE SEQUENCE [LARGE SCALE GENOMIC DNA]</scope>
    <source>
        <strain>MoPn / Nigg</strain>
    </source>
</reference>
<accession>Q9PJY8</accession>
<protein>
    <recommendedName>
        <fullName evidence="1">Lipoprotein signal peptidase</fullName>
        <ecNumber evidence="1">3.4.23.36</ecNumber>
    </recommendedName>
    <alternativeName>
        <fullName evidence="1">Prolipoprotein signal peptidase</fullName>
    </alternativeName>
    <alternativeName>
        <fullName evidence="1">Signal peptidase II</fullName>
        <shortName evidence="1">SPase II</shortName>
    </alternativeName>
</protein>
<comment type="function">
    <text evidence="1">This protein specifically catalyzes the removal of signal peptides from prolipoproteins.</text>
</comment>
<comment type="catalytic activity">
    <reaction evidence="1">
        <text>Release of signal peptides from bacterial membrane prolipoproteins. Hydrolyzes -Xaa-Yaa-Zaa-|-(S,diacylglyceryl)Cys-, in which Xaa is hydrophobic (preferably Leu), and Yaa (Ala or Ser) and Zaa (Gly or Ala) have small, neutral side chains.</text>
        <dbReference type="EC" id="3.4.23.36"/>
    </reaction>
</comment>
<comment type="pathway">
    <text evidence="1">Protein modification; lipoprotein biosynthesis (signal peptide cleavage).</text>
</comment>
<comment type="subcellular location">
    <subcellularLocation>
        <location evidence="1">Cell inner membrane</location>
        <topology evidence="1">Multi-pass membrane protein</topology>
    </subcellularLocation>
</comment>
<comment type="similarity">
    <text evidence="1 2">Belongs to the peptidase A8 family.</text>
</comment>
<proteinExistence type="inferred from homology"/>
<feature type="chain" id="PRO_0000178775" description="Lipoprotein signal peptidase">
    <location>
        <begin position="1"/>
        <end position="167"/>
    </location>
</feature>
<feature type="transmembrane region" description="Helical" evidence="1">
    <location>
        <begin position="8"/>
        <end position="28"/>
    </location>
</feature>
<feature type="transmembrane region" description="Helical" evidence="1">
    <location>
        <begin position="46"/>
        <end position="66"/>
    </location>
</feature>
<feature type="transmembrane region" description="Helical" evidence="1">
    <location>
        <begin position="70"/>
        <end position="90"/>
    </location>
</feature>
<feature type="transmembrane region" description="Helical" evidence="1">
    <location>
        <begin position="101"/>
        <end position="121"/>
    </location>
</feature>
<feature type="transmembrane region" description="Helical" evidence="1">
    <location>
        <begin position="139"/>
        <end position="159"/>
    </location>
</feature>
<feature type="active site" evidence="1">
    <location>
        <position position="125"/>
    </location>
</feature>
<feature type="active site" evidence="1">
    <location>
        <position position="143"/>
    </location>
</feature>
<name>LSPA_CHLMU</name>
<dbReference type="EC" id="3.4.23.36" evidence="1"/>
<dbReference type="EMBL" id="AE002160">
    <property type="protein sequence ID" value="AAF39505.1"/>
    <property type="molecule type" value="Genomic_DNA"/>
</dbReference>
<dbReference type="PIR" id="B81676">
    <property type="entry name" value="B81676"/>
</dbReference>
<dbReference type="RefSeq" id="WP_010231225.1">
    <property type="nucleotide sequence ID" value="NZ_CP063055.1"/>
</dbReference>
<dbReference type="SMR" id="Q9PJY8"/>
<dbReference type="GeneID" id="1246049"/>
<dbReference type="KEGG" id="cmu:TC_0688"/>
<dbReference type="eggNOG" id="COG0597">
    <property type="taxonomic scope" value="Bacteria"/>
</dbReference>
<dbReference type="HOGENOM" id="CLU_083252_3_0_0"/>
<dbReference type="OrthoDB" id="9810259at2"/>
<dbReference type="UniPathway" id="UPA00665"/>
<dbReference type="Proteomes" id="UP000000800">
    <property type="component" value="Chromosome"/>
</dbReference>
<dbReference type="GO" id="GO:0005886">
    <property type="term" value="C:plasma membrane"/>
    <property type="evidence" value="ECO:0007669"/>
    <property type="project" value="UniProtKB-SubCell"/>
</dbReference>
<dbReference type="GO" id="GO:0004190">
    <property type="term" value="F:aspartic-type endopeptidase activity"/>
    <property type="evidence" value="ECO:0007669"/>
    <property type="project" value="UniProtKB-UniRule"/>
</dbReference>
<dbReference type="GO" id="GO:0006508">
    <property type="term" value="P:proteolysis"/>
    <property type="evidence" value="ECO:0007669"/>
    <property type="project" value="UniProtKB-KW"/>
</dbReference>
<dbReference type="HAMAP" id="MF_00161">
    <property type="entry name" value="LspA"/>
    <property type="match status" value="1"/>
</dbReference>
<dbReference type="InterPro" id="IPR001872">
    <property type="entry name" value="Peptidase_A8"/>
</dbReference>
<dbReference type="NCBIfam" id="TIGR00077">
    <property type="entry name" value="lspA"/>
    <property type="match status" value="1"/>
</dbReference>
<dbReference type="PANTHER" id="PTHR33695">
    <property type="entry name" value="LIPOPROTEIN SIGNAL PEPTIDASE"/>
    <property type="match status" value="1"/>
</dbReference>
<dbReference type="PANTHER" id="PTHR33695:SF1">
    <property type="entry name" value="LIPOPROTEIN SIGNAL PEPTIDASE"/>
    <property type="match status" value="1"/>
</dbReference>
<dbReference type="Pfam" id="PF01252">
    <property type="entry name" value="Peptidase_A8"/>
    <property type="match status" value="1"/>
</dbReference>
<dbReference type="PRINTS" id="PR00781">
    <property type="entry name" value="LIPOSIGPTASE"/>
</dbReference>
<dbReference type="PROSITE" id="PS00855">
    <property type="entry name" value="SPASE_II"/>
    <property type="match status" value="1"/>
</dbReference>
<organism>
    <name type="scientific">Chlamydia muridarum (strain MoPn / Nigg)</name>
    <dbReference type="NCBI Taxonomy" id="243161"/>
    <lineage>
        <taxon>Bacteria</taxon>
        <taxon>Pseudomonadati</taxon>
        <taxon>Chlamydiota</taxon>
        <taxon>Chlamydiia</taxon>
        <taxon>Chlamydiales</taxon>
        <taxon>Chlamydiaceae</taxon>
        <taxon>Chlamydia/Chlamydophila group</taxon>
        <taxon>Chlamydia</taxon>
    </lineage>
</organism>
<keyword id="KW-0064">Aspartyl protease</keyword>
<keyword id="KW-0997">Cell inner membrane</keyword>
<keyword id="KW-1003">Cell membrane</keyword>
<keyword id="KW-0378">Hydrolase</keyword>
<keyword id="KW-0472">Membrane</keyword>
<keyword id="KW-0645">Protease</keyword>
<keyword id="KW-0812">Transmembrane</keyword>
<keyword id="KW-1133">Transmembrane helix</keyword>
<sequence>MTTRSLSTFLTSFLLVSLDWVSKLVVLLKSCQLSPHSPALLYSYVWGHFSFLIVPSFNEGAAFGLFAQYKIPLLIFRVFVILCLFLFLGIKFRSLHIRTRIALTLILAGALGNVGDILFHGKVVDFLSINYYSWSFPSFNLADAFISLGTLLLVGHLYFSKEDKKYF</sequence>
<gene>
    <name evidence="1" type="primary">lspA</name>
    <name type="ordered locus">TC_0688</name>
</gene>
<evidence type="ECO:0000255" key="1">
    <source>
        <dbReference type="HAMAP-Rule" id="MF_00161"/>
    </source>
</evidence>
<evidence type="ECO:0000305" key="2"/>